<feature type="chain" id="PRO_0000048265" description="Tubulin beta-3 chain">
    <location>
        <begin position="1"/>
        <end position="445"/>
    </location>
</feature>
<feature type="region of interest" description="Disordered" evidence="7">
    <location>
        <begin position="425"/>
        <end position="445"/>
    </location>
</feature>
<feature type="short sequence motif" description="MREI motif" evidence="2">
    <location>
        <begin position="1"/>
        <end position="4"/>
    </location>
</feature>
<feature type="compositionally biased region" description="Acidic residues" evidence="7">
    <location>
        <begin position="429"/>
        <end position="445"/>
    </location>
</feature>
<feature type="binding site" evidence="4">
    <location>
        <position position="11"/>
    </location>
    <ligand>
        <name>GTP</name>
        <dbReference type="ChEBI" id="CHEBI:37565"/>
    </ligand>
</feature>
<feature type="binding site" evidence="3">
    <location>
        <position position="69"/>
    </location>
    <ligand>
        <name>GTP</name>
        <dbReference type="ChEBI" id="CHEBI:37565"/>
    </ligand>
</feature>
<feature type="binding site" evidence="3">
    <location>
        <position position="69"/>
    </location>
    <ligand>
        <name>Mg(2+)</name>
        <dbReference type="ChEBI" id="CHEBI:18420"/>
    </ligand>
</feature>
<feature type="binding site" evidence="4">
    <location>
        <position position="138"/>
    </location>
    <ligand>
        <name>GTP</name>
        <dbReference type="ChEBI" id="CHEBI:37565"/>
    </ligand>
</feature>
<feature type="binding site" evidence="4">
    <location>
        <position position="142"/>
    </location>
    <ligand>
        <name>GTP</name>
        <dbReference type="ChEBI" id="CHEBI:37565"/>
    </ligand>
</feature>
<feature type="binding site" evidence="4">
    <location>
        <position position="143"/>
    </location>
    <ligand>
        <name>GTP</name>
        <dbReference type="ChEBI" id="CHEBI:37565"/>
    </ligand>
</feature>
<feature type="binding site" evidence="4">
    <location>
        <position position="144"/>
    </location>
    <ligand>
        <name>GTP</name>
        <dbReference type="ChEBI" id="CHEBI:37565"/>
    </ligand>
</feature>
<feature type="binding site" evidence="4">
    <location>
        <position position="204"/>
    </location>
    <ligand>
        <name>GTP</name>
        <dbReference type="ChEBI" id="CHEBI:37565"/>
    </ligand>
</feature>
<feature type="binding site" evidence="4">
    <location>
        <position position="226"/>
    </location>
    <ligand>
        <name>GTP</name>
        <dbReference type="ChEBI" id="CHEBI:37565"/>
    </ligand>
</feature>
<feature type="modified residue" description="5-glutamyl polyglutamate" evidence="5">
    <location>
        <position position="438"/>
    </location>
</feature>
<organism>
    <name type="scientific">Gallus gallus</name>
    <name type="common">Chicken</name>
    <dbReference type="NCBI Taxonomy" id="9031"/>
    <lineage>
        <taxon>Eukaryota</taxon>
        <taxon>Metazoa</taxon>
        <taxon>Chordata</taxon>
        <taxon>Craniata</taxon>
        <taxon>Vertebrata</taxon>
        <taxon>Euteleostomi</taxon>
        <taxon>Archelosauria</taxon>
        <taxon>Archosauria</taxon>
        <taxon>Dinosauria</taxon>
        <taxon>Saurischia</taxon>
        <taxon>Theropoda</taxon>
        <taxon>Coelurosauria</taxon>
        <taxon>Aves</taxon>
        <taxon>Neognathae</taxon>
        <taxon>Galloanserae</taxon>
        <taxon>Galliformes</taxon>
        <taxon>Phasianidae</taxon>
        <taxon>Phasianinae</taxon>
        <taxon>Gallus</taxon>
    </lineage>
</organism>
<protein>
    <recommendedName>
        <fullName>Tubulin beta-3 chain</fullName>
    </recommendedName>
    <alternativeName>
        <fullName>Beta-tubulin class-IV</fullName>
    </alternativeName>
</protein>
<name>TBB3_CHICK</name>
<sequence length="445" mass="49861">MREIVHLQAGQCGNQIGAKFWEVISDEHGIDPTGTYHGDSDLQLERINVYYNEATGGKYVPRAVLVDLEPGTMDSVRSGPFRQIFRPDNFVFGQSGAGNNWAKGHYTEGAELVDSVLDVVRKEAESCDCLQGFQLTHSLGGGTGSGMGTLLISKIREEYPDRIMNTFSVVPSPKVSDTVVEPYNATLSVHQLVENTDETYCIDNEALYDICFRTLKLTTPTYGDLNHLVSATMSGVTTCLRFPGQLNADLRKLAVNMVPFPRLHFFMPGFAPLTSRGSQQYRALTVPDLTQQMFDAKNMMAACEPGHGRYLTVAAVFRGRMSMKEVDEQMLNVQNKNSSYFVEWIPNNVKTAVCDIPPRGLKMSATFIGNSTAIQELFKRISEQFTAMFRRKAFLHWYTGEGMDEMEFTEAESNMNDLVSEYQQYQDATAEEEGEFEEEAEEEAE</sequence>
<proteinExistence type="evidence at transcript level"/>
<reference key="1">
    <citation type="journal article" date="1986" name="J. Biol. Chem.">
        <title>Sequence and expression of the chicken beta 3 tubulin gene. A vertebrate testis beta-tubulin isotype.</title>
        <authorList>
            <person name="Sullivan K.F."/>
            <person name="Machlin P.S."/>
            <person name="Ratrie H. III"/>
            <person name="Cleveland D.W."/>
        </authorList>
    </citation>
    <scope>NUCLEOTIDE SEQUENCE [GENOMIC DNA]</scope>
</reference>
<reference key="2">
    <citation type="journal article" date="2017" name="J. Neurosci.">
        <title>Uncoupling of UNC5C with Polymerized TUBB3 in Microtubules Mediates Netrin-1 Repulsion.</title>
        <authorList>
            <person name="Shao Q."/>
            <person name="Yang T."/>
            <person name="Huang H."/>
            <person name="Alarmanazi F."/>
            <person name="Liu G."/>
        </authorList>
    </citation>
    <scope>FUNCTION</scope>
</reference>
<accession>P09206</accession>
<evidence type="ECO:0000250" key="1">
    <source>
        <dbReference type="UniProtKB" id="A2AQ07"/>
    </source>
</evidence>
<evidence type="ECO:0000250" key="2">
    <source>
        <dbReference type="UniProtKB" id="P07437"/>
    </source>
</evidence>
<evidence type="ECO:0000250" key="3">
    <source>
        <dbReference type="UniProtKB" id="P68363"/>
    </source>
</evidence>
<evidence type="ECO:0000250" key="4">
    <source>
        <dbReference type="UniProtKB" id="Q13509"/>
    </source>
</evidence>
<evidence type="ECO:0000250" key="5">
    <source>
        <dbReference type="UniProtKB" id="Q2T9S0"/>
    </source>
</evidence>
<evidence type="ECO:0000250" key="6">
    <source>
        <dbReference type="UniProtKB" id="Q71U36"/>
    </source>
</evidence>
<evidence type="ECO:0000256" key="7">
    <source>
        <dbReference type="SAM" id="MobiDB-lite"/>
    </source>
</evidence>
<evidence type="ECO:0000269" key="8">
    <source>
    </source>
</evidence>
<evidence type="ECO:0000305" key="9"/>
<dbReference type="EMBL" id="M14228">
    <property type="protein sequence ID" value="AAA49118.1"/>
    <property type="molecule type" value="Genomic_DNA"/>
</dbReference>
<dbReference type="PIR" id="A24701">
    <property type="entry name" value="A24701"/>
</dbReference>
<dbReference type="SMR" id="P09206"/>
<dbReference type="FunCoup" id="P09206">
    <property type="interactions" value="801"/>
</dbReference>
<dbReference type="STRING" id="9031.ENSGALP00000013964"/>
<dbReference type="PaxDb" id="9031-ENSGALP00000013964"/>
<dbReference type="VEuPathDB" id="HostDB:geneid_417255"/>
<dbReference type="eggNOG" id="KOG1375">
    <property type="taxonomic scope" value="Eukaryota"/>
</dbReference>
<dbReference type="InParanoid" id="P09206"/>
<dbReference type="Proteomes" id="UP000000539">
    <property type="component" value="Unassembled WGS sequence"/>
</dbReference>
<dbReference type="GO" id="GO:0005737">
    <property type="term" value="C:cytoplasm"/>
    <property type="evidence" value="ECO:0000318"/>
    <property type="project" value="GO_Central"/>
</dbReference>
<dbReference type="GO" id="GO:0005874">
    <property type="term" value="C:microtubule"/>
    <property type="evidence" value="ECO:0000318"/>
    <property type="project" value="GO_Central"/>
</dbReference>
<dbReference type="GO" id="GO:0005525">
    <property type="term" value="F:GTP binding"/>
    <property type="evidence" value="ECO:0000318"/>
    <property type="project" value="GO_Central"/>
</dbReference>
<dbReference type="GO" id="GO:0003924">
    <property type="term" value="F:GTPase activity"/>
    <property type="evidence" value="ECO:0007669"/>
    <property type="project" value="InterPro"/>
</dbReference>
<dbReference type="GO" id="GO:0046872">
    <property type="term" value="F:metal ion binding"/>
    <property type="evidence" value="ECO:0007669"/>
    <property type="project" value="UniProtKB-KW"/>
</dbReference>
<dbReference type="GO" id="GO:0005200">
    <property type="term" value="F:structural constituent of cytoskeleton"/>
    <property type="evidence" value="ECO:0000318"/>
    <property type="project" value="GO_Central"/>
</dbReference>
<dbReference type="GO" id="GO:1990791">
    <property type="term" value="P:dorsal root ganglion development"/>
    <property type="evidence" value="ECO:0000315"/>
    <property type="project" value="UniProtKB"/>
</dbReference>
<dbReference type="GO" id="GO:0000226">
    <property type="term" value="P:microtubule cytoskeleton organization"/>
    <property type="evidence" value="ECO:0000318"/>
    <property type="project" value="GO_Central"/>
</dbReference>
<dbReference type="GO" id="GO:0000278">
    <property type="term" value="P:mitotic cell cycle"/>
    <property type="evidence" value="ECO:0000318"/>
    <property type="project" value="GO_Central"/>
</dbReference>
<dbReference type="CDD" id="cd02187">
    <property type="entry name" value="beta_tubulin"/>
    <property type="match status" value="1"/>
</dbReference>
<dbReference type="FunFam" id="1.10.287.600:FF:000006">
    <property type="entry name" value="Tubulin beta chain"/>
    <property type="match status" value="1"/>
</dbReference>
<dbReference type="FunFam" id="3.30.1330.20:FF:000002">
    <property type="entry name" value="Tubulin beta chain"/>
    <property type="match status" value="1"/>
</dbReference>
<dbReference type="FunFam" id="3.40.50.1440:FF:000003">
    <property type="entry name" value="Tubulin beta chain"/>
    <property type="match status" value="1"/>
</dbReference>
<dbReference type="Gene3D" id="1.10.287.600">
    <property type="entry name" value="Helix hairpin bin"/>
    <property type="match status" value="1"/>
</dbReference>
<dbReference type="Gene3D" id="3.30.1330.20">
    <property type="entry name" value="Tubulin/FtsZ, C-terminal domain"/>
    <property type="match status" value="1"/>
</dbReference>
<dbReference type="Gene3D" id="3.40.50.1440">
    <property type="entry name" value="Tubulin/FtsZ, GTPase domain"/>
    <property type="match status" value="1"/>
</dbReference>
<dbReference type="InterPro" id="IPR013838">
    <property type="entry name" value="Beta-tubulin_BS"/>
</dbReference>
<dbReference type="InterPro" id="IPR002453">
    <property type="entry name" value="Beta_tubulin"/>
</dbReference>
<dbReference type="InterPro" id="IPR008280">
    <property type="entry name" value="Tub_FtsZ_C"/>
</dbReference>
<dbReference type="InterPro" id="IPR000217">
    <property type="entry name" value="Tubulin"/>
</dbReference>
<dbReference type="InterPro" id="IPR037103">
    <property type="entry name" value="Tubulin/FtsZ-like_C"/>
</dbReference>
<dbReference type="InterPro" id="IPR018316">
    <property type="entry name" value="Tubulin/FtsZ_2-layer-sand-dom"/>
</dbReference>
<dbReference type="InterPro" id="IPR036525">
    <property type="entry name" value="Tubulin/FtsZ_GTPase_sf"/>
</dbReference>
<dbReference type="InterPro" id="IPR023123">
    <property type="entry name" value="Tubulin_C"/>
</dbReference>
<dbReference type="InterPro" id="IPR017975">
    <property type="entry name" value="Tubulin_CS"/>
</dbReference>
<dbReference type="InterPro" id="IPR003008">
    <property type="entry name" value="Tubulin_FtsZ_GTPase"/>
</dbReference>
<dbReference type="PANTHER" id="PTHR11588">
    <property type="entry name" value="TUBULIN"/>
    <property type="match status" value="1"/>
</dbReference>
<dbReference type="Pfam" id="PF00091">
    <property type="entry name" value="Tubulin"/>
    <property type="match status" value="1"/>
</dbReference>
<dbReference type="Pfam" id="PF03953">
    <property type="entry name" value="Tubulin_C"/>
    <property type="match status" value="1"/>
</dbReference>
<dbReference type="PRINTS" id="PR01163">
    <property type="entry name" value="BETATUBULIN"/>
</dbReference>
<dbReference type="PRINTS" id="PR01161">
    <property type="entry name" value="TUBULIN"/>
</dbReference>
<dbReference type="SMART" id="SM00864">
    <property type="entry name" value="Tubulin"/>
    <property type="match status" value="1"/>
</dbReference>
<dbReference type="SMART" id="SM00865">
    <property type="entry name" value="Tubulin_C"/>
    <property type="match status" value="1"/>
</dbReference>
<dbReference type="SUPFAM" id="SSF55307">
    <property type="entry name" value="Tubulin C-terminal domain-like"/>
    <property type="match status" value="1"/>
</dbReference>
<dbReference type="SUPFAM" id="SSF52490">
    <property type="entry name" value="Tubulin nucleotide-binding domain-like"/>
    <property type="match status" value="1"/>
</dbReference>
<dbReference type="PROSITE" id="PS00227">
    <property type="entry name" value="TUBULIN"/>
    <property type="match status" value="1"/>
</dbReference>
<dbReference type="PROSITE" id="PS00228">
    <property type="entry name" value="TUBULIN_B_AUTOREG"/>
    <property type="match status" value="1"/>
</dbReference>
<comment type="function">
    <text evidence="8">Tubulin is the major constituent of microtubules, a cylinder consisting of laterally associated linear protofilaments composed of alpha- and beta-tubulin heterodimers. Microtubules grow by the addition of GTP-tubulin dimers to the microtubule end, where a stabilizing cap forms. Below the cap, tubulin dimers are in GDP-bound state, owing to GTPase activity of alpha-tubulin. TUBB3 plays a role in dorsal root ganglion axon projection towards the spinal cord (PubMed:28483977).</text>
</comment>
<comment type="cofactor">
    <cofactor evidence="3">
        <name>Mg(2+)</name>
        <dbReference type="ChEBI" id="CHEBI:18420"/>
    </cofactor>
</comment>
<comment type="subunit">
    <text>Dimer of alpha and beta chains. A typical microtubule is a hollow water-filled tube with an outer diameter of 25 nm and an inner diameter of 15 nM. Alpha-beta heterodimers associate head-to-tail to form protofilaments running lengthwise along the microtubule wall with the beta-tubulin subunit facing the microtubule plus end conferring a structural polarity. Microtubules usually have 13 protofilaments but different protofilament numbers can be found in some organisms and specialized cells.</text>
</comment>
<comment type="subcellular location">
    <subcellularLocation>
        <location>Cytoplasm</location>
        <location>Cytoskeleton</location>
    </subcellularLocation>
</comment>
<comment type="tissue specificity">
    <text>Highly expressed in testis.</text>
</comment>
<comment type="domain">
    <text evidence="2">The MREI motif is common among all beta-tubulin isoforms and may be critical for tubulin autoregulation.</text>
</comment>
<comment type="PTM">
    <text evidence="1">Some glutamate residues at the C-terminus are polyglycylated, resulting in polyglycine chains on the gamma-carboxyl group. Glycylation is mainly limited to tubulin incorporated into axonemes (cilia and flagella) whereas glutamylation is prevalent in neuronal cells, centrioles, axonemes, and the mitotic spindle. Both modifications can coexist on the same protein on adjacent residues, and lowering polyglycylation levels increases polyglutamylation, and reciprocally. The precise function of polyglycylation is still unclear.</text>
</comment>
<comment type="PTM">
    <text evidence="1 6">Some glutamate residues at the C-terminus are polyglutamylated, resulting in polyglutamate chains on the gamma-carboxyl group (By similarity). Polyglutamylation plays a key role in microtubule severing by spastin (SPAST). SPAST preferentially recognizes and acts on microtubules decorated with short polyglutamate tails: severing activity by SPAST increases as the number of glutamates per tubulin rises from one to eight, but decreases beyond this glutamylation threshold (By similarity).</text>
</comment>
<comment type="similarity">
    <text evidence="9">Belongs to the tubulin family.</text>
</comment>
<keyword id="KW-0963">Cytoplasm</keyword>
<keyword id="KW-0206">Cytoskeleton</keyword>
<keyword id="KW-0342">GTP-binding</keyword>
<keyword id="KW-1017">Isopeptide bond</keyword>
<keyword id="KW-0460">Magnesium</keyword>
<keyword id="KW-0479">Metal-binding</keyword>
<keyword id="KW-0493">Microtubule</keyword>
<keyword id="KW-0547">Nucleotide-binding</keyword>
<keyword id="KW-1185">Reference proteome</keyword>